<feature type="chain" id="PRO_0000075493" description="Insertion element IS2 uncharacterized 11.1 kDa protein">
    <location>
        <begin position="1"/>
        <end position="97"/>
    </location>
</feature>
<sequence>MRSCTSFSDEPMTGWMAAAVVTLMIRMCFSVYTMLSESCQRMVIVGYGRCFADRQNLMVCLRSMPNVFTGSCARMRCCLSENLLYRHRNGHIQAEWP</sequence>
<dbReference type="EMBL" id="V00279">
    <property type="protein sequence ID" value="CAA23540.1"/>
    <property type="molecule type" value="Genomic_DNA"/>
</dbReference>
<dbReference type="PIR" id="JQ0041">
    <property type="entry name" value="JQ0041"/>
</dbReference>
<reference key="1">
    <citation type="journal article" date="1987" name="Gene">
        <title>Genetic organization of insertion element IS2 based on a revised nucleotide sequence.</title>
        <authorList>
            <person name="Ronecker H.J."/>
            <person name="Rak B."/>
        </authorList>
    </citation>
    <scope>NUCLEOTIDE SEQUENCE [GENOMIC DNA]</scope>
    <source>
        <strain>ATCC 33694 / HB101</strain>
    </source>
</reference>
<keyword id="KW-0814">Transposable element</keyword>
<protein>
    <recommendedName>
        <fullName>Insertion element IS2 uncharacterized 11.1 kDa protein</fullName>
    </recommendedName>
    <alternativeName>
        <fullName>ORF3</fullName>
    </alternativeName>
</protein>
<organism>
    <name type="scientific">Escherichia coli</name>
    <dbReference type="NCBI Taxonomy" id="562"/>
    <lineage>
        <taxon>Bacteria</taxon>
        <taxon>Pseudomonadati</taxon>
        <taxon>Pseudomonadota</taxon>
        <taxon>Gammaproteobacteria</taxon>
        <taxon>Enterobacterales</taxon>
        <taxon>Enterobacteriaceae</taxon>
        <taxon>Escherichia</taxon>
    </lineage>
</organism>
<name>YI23_ECOLX</name>
<proteinExistence type="predicted"/>
<accession>P19778</accession>
<accession>P76918</accession>